<name>MOBA_SYNE7</name>
<reference key="1">
    <citation type="submission" date="1997-05" db="EMBL/GenBank/DDBJ databases">
        <title>The narC locus of Synechococcus sp. strain PCC 7942 corresponds to a mobA gene for molybdopterin guanine dinucleotide biosynthesis.</title>
        <authorList>
            <person name="Rubio L.M."/>
            <person name="Flores E."/>
            <person name="Herrero A."/>
        </authorList>
    </citation>
    <scope>NUCLEOTIDE SEQUENCE [GENOMIC DNA]</scope>
</reference>
<reference key="2">
    <citation type="submission" date="2002-06" db="EMBL/GenBank/DDBJ databases">
        <title>Synechococcus elongatus PCC7942 cosmid 7G3.</title>
        <authorList>
            <person name="Holtman C.K."/>
            <person name="Sandoval P."/>
            <person name="Chen Y."/>
            <person name="Socias T."/>
            <person name="Mohler B.J."/>
            <person name="McMurtry S."/>
            <person name="Gonzalez A."/>
            <person name="Salinas I."/>
            <person name="Golden S.S."/>
            <person name="Youderian P."/>
        </authorList>
    </citation>
    <scope>NUCLEOTIDE SEQUENCE [GENOMIC DNA]</scope>
</reference>
<reference key="3">
    <citation type="submission" date="2005-08" db="EMBL/GenBank/DDBJ databases">
        <title>Complete sequence of chromosome 1 of Synechococcus elongatus PCC 7942.</title>
        <authorList>
            <consortium name="US DOE Joint Genome Institute"/>
            <person name="Copeland A."/>
            <person name="Lucas S."/>
            <person name="Lapidus A."/>
            <person name="Barry K."/>
            <person name="Detter J.C."/>
            <person name="Glavina T."/>
            <person name="Hammon N."/>
            <person name="Israni S."/>
            <person name="Pitluck S."/>
            <person name="Schmutz J."/>
            <person name="Larimer F."/>
            <person name="Land M."/>
            <person name="Kyrpides N."/>
            <person name="Lykidis A."/>
            <person name="Golden S."/>
            <person name="Richardson P."/>
        </authorList>
    </citation>
    <scope>NUCLEOTIDE SEQUENCE [LARGE SCALE GENOMIC DNA]</scope>
    <source>
        <strain>ATCC 33912 / PCC 7942 / FACHB-805</strain>
    </source>
</reference>
<proteinExistence type="inferred from homology"/>
<protein>
    <recommendedName>
        <fullName evidence="1">Probable molybdenum cofactor guanylyltransferase</fullName>
        <shortName evidence="1">MoCo guanylyltransferase</shortName>
        <ecNumber evidence="1">2.7.7.77</ecNumber>
    </recommendedName>
    <alternativeName>
        <fullName evidence="1">GTP:molybdopterin guanylyltransferase</fullName>
    </alternativeName>
    <alternativeName>
        <fullName evidence="1">Mo-MPT guanylyltransferase</fullName>
    </alternativeName>
    <alternativeName>
        <fullName evidence="1">Molybdopterin guanylyltransferase</fullName>
    </alternativeName>
    <alternativeName>
        <fullName evidence="1">Molybdopterin-guanine dinucleotide synthase</fullName>
        <shortName evidence="1">MGD synthase</shortName>
    </alternativeName>
</protein>
<gene>
    <name evidence="1" type="primary">mobA</name>
    <name type="ordered locus">Synpcc7942_1189</name>
    <name type="ORF">se00039</name>
</gene>
<organism>
    <name type="scientific">Synechococcus elongatus (strain ATCC 33912 / PCC 7942 / FACHB-805)</name>
    <name type="common">Anacystis nidulans R2</name>
    <dbReference type="NCBI Taxonomy" id="1140"/>
    <lineage>
        <taxon>Bacteria</taxon>
        <taxon>Bacillati</taxon>
        <taxon>Cyanobacteriota</taxon>
        <taxon>Cyanophyceae</taxon>
        <taxon>Synechococcales</taxon>
        <taxon>Synechococcaceae</taxon>
        <taxon>Synechococcus</taxon>
    </lineage>
</organism>
<accession>O06866</accession>
<accession>Q31P00</accession>
<accession>Q79PE7</accession>
<evidence type="ECO:0000255" key="1">
    <source>
        <dbReference type="HAMAP-Rule" id="MF_00316"/>
    </source>
</evidence>
<sequence length="194" mass="21572">MNFAALILAGGSSRRMGQDKALLRLNGEPLLIRTSRIAAAVCDSVWICSPEPDRYQSLLSQPVQWLTEPQPTGPQGPLTALAWALPQIDADWILLLACDLPRLAIAPLQAWRQQVELLPEDCRAAIARTEQGWEPLIGFYRPAIAPTIAPWLSQGRRDFQGWLATVAVQELPLSDRDWLVNCNTPTDWQALQLS</sequence>
<comment type="function">
    <text evidence="1">Transfers a GMP moiety from GTP to Mo-molybdopterin (Mo-MPT) cofactor (Moco or molybdenum cofactor) to form Mo-molybdopterin guanine dinucleotide (Mo-MGD) cofactor.</text>
</comment>
<comment type="catalytic activity">
    <reaction evidence="1">
        <text>Mo-molybdopterin + GTP + H(+) = Mo-molybdopterin guanine dinucleotide + diphosphate</text>
        <dbReference type="Rhea" id="RHEA:34243"/>
        <dbReference type="ChEBI" id="CHEBI:15378"/>
        <dbReference type="ChEBI" id="CHEBI:33019"/>
        <dbReference type="ChEBI" id="CHEBI:37565"/>
        <dbReference type="ChEBI" id="CHEBI:71302"/>
        <dbReference type="ChEBI" id="CHEBI:71310"/>
        <dbReference type="EC" id="2.7.7.77"/>
    </reaction>
</comment>
<comment type="cofactor">
    <cofactor evidence="1">
        <name>Mg(2+)</name>
        <dbReference type="ChEBI" id="CHEBI:18420"/>
    </cofactor>
</comment>
<comment type="subcellular location">
    <subcellularLocation>
        <location evidence="1">Cytoplasm</location>
    </subcellularLocation>
</comment>
<comment type="domain">
    <text evidence="1">The N-terminal domain determines nucleotide recognition and specific binding, while the C-terminal domain determines the specific binding to the target protein.</text>
</comment>
<comment type="similarity">
    <text evidence="1">Belongs to the MobA family.</text>
</comment>
<dbReference type="EC" id="2.7.7.77" evidence="1"/>
<dbReference type="EMBL" id="Y13330">
    <property type="protein sequence ID" value="CAA73772.1"/>
    <property type="molecule type" value="Genomic_DNA"/>
</dbReference>
<dbReference type="EMBL" id="AY120853">
    <property type="protein sequence ID" value="AAM82714.1"/>
    <property type="molecule type" value="Genomic_DNA"/>
</dbReference>
<dbReference type="EMBL" id="CP000100">
    <property type="protein sequence ID" value="ABB57219.1"/>
    <property type="molecule type" value="Genomic_DNA"/>
</dbReference>
<dbReference type="RefSeq" id="WP_011242674.1">
    <property type="nucleotide sequence ID" value="NZ_JACJTX010000003.1"/>
</dbReference>
<dbReference type="SMR" id="O06866"/>
<dbReference type="STRING" id="1140.Synpcc7942_1189"/>
<dbReference type="PaxDb" id="1140-Synpcc7942_1189"/>
<dbReference type="KEGG" id="syf:Synpcc7942_1189"/>
<dbReference type="eggNOG" id="COG0746">
    <property type="taxonomic scope" value="Bacteria"/>
</dbReference>
<dbReference type="HOGENOM" id="CLU_055597_2_2_3"/>
<dbReference type="OrthoDB" id="9788394at2"/>
<dbReference type="BioCyc" id="SYNEL:SYNPCC7942_1189-MONOMER"/>
<dbReference type="Proteomes" id="UP000889800">
    <property type="component" value="Chromosome"/>
</dbReference>
<dbReference type="GO" id="GO:0005737">
    <property type="term" value="C:cytoplasm"/>
    <property type="evidence" value="ECO:0007669"/>
    <property type="project" value="UniProtKB-SubCell"/>
</dbReference>
<dbReference type="GO" id="GO:0005525">
    <property type="term" value="F:GTP binding"/>
    <property type="evidence" value="ECO:0007669"/>
    <property type="project" value="UniProtKB-UniRule"/>
</dbReference>
<dbReference type="GO" id="GO:0046872">
    <property type="term" value="F:metal ion binding"/>
    <property type="evidence" value="ECO:0007669"/>
    <property type="project" value="UniProtKB-KW"/>
</dbReference>
<dbReference type="GO" id="GO:0061603">
    <property type="term" value="F:molybdenum cofactor guanylyltransferase activity"/>
    <property type="evidence" value="ECO:0007669"/>
    <property type="project" value="UniProtKB-EC"/>
</dbReference>
<dbReference type="GO" id="GO:0006777">
    <property type="term" value="P:Mo-molybdopterin cofactor biosynthetic process"/>
    <property type="evidence" value="ECO:0007669"/>
    <property type="project" value="UniProtKB-KW"/>
</dbReference>
<dbReference type="CDD" id="cd02503">
    <property type="entry name" value="MobA"/>
    <property type="match status" value="1"/>
</dbReference>
<dbReference type="Gene3D" id="3.90.550.10">
    <property type="entry name" value="Spore Coat Polysaccharide Biosynthesis Protein SpsA, Chain A"/>
    <property type="match status" value="1"/>
</dbReference>
<dbReference type="HAMAP" id="MF_00316">
    <property type="entry name" value="MobA"/>
    <property type="match status" value="1"/>
</dbReference>
<dbReference type="InterPro" id="IPR025877">
    <property type="entry name" value="MobA-like_NTP_Trfase"/>
</dbReference>
<dbReference type="InterPro" id="IPR013482">
    <property type="entry name" value="Molybde_CF_guanTrfase"/>
</dbReference>
<dbReference type="InterPro" id="IPR029044">
    <property type="entry name" value="Nucleotide-diphossugar_trans"/>
</dbReference>
<dbReference type="NCBIfam" id="NF002741">
    <property type="entry name" value="PRK02726.1"/>
    <property type="match status" value="1"/>
</dbReference>
<dbReference type="PANTHER" id="PTHR19136">
    <property type="entry name" value="MOLYBDENUM COFACTOR GUANYLYLTRANSFERASE"/>
    <property type="match status" value="1"/>
</dbReference>
<dbReference type="PANTHER" id="PTHR19136:SF81">
    <property type="entry name" value="MOLYBDENUM COFACTOR GUANYLYLTRANSFERASE"/>
    <property type="match status" value="1"/>
</dbReference>
<dbReference type="Pfam" id="PF12804">
    <property type="entry name" value="NTP_transf_3"/>
    <property type="match status" value="1"/>
</dbReference>
<dbReference type="SUPFAM" id="SSF53448">
    <property type="entry name" value="Nucleotide-diphospho-sugar transferases"/>
    <property type="match status" value="1"/>
</dbReference>
<keyword id="KW-0963">Cytoplasm</keyword>
<keyword id="KW-0342">GTP-binding</keyword>
<keyword id="KW-0460">Magnesium</keyword>
<keyword id="KW-0479">Metal-binding</keyword>
<keyword id="KW-0501">Molybdenum cofactor biosynthesis</keyword>
<keyword id="KW-0547">Nucleotide-binding</keyword>
<keyword id="KW-1185">Reference proteome</keyword>
<keyword id="KW-0808">Transferase</keyword>
<feature type="chain" id="PRO_0000134920" description="Probable molybdenum cofactor guanylyltransferase">
    <location>
        <begin position="1"/>
        <end position="194"/>
    </location>
</feature>
<feature type="binding site" evidence="1">
    <location>
        <begin position="8"/>
        <end position="10"/>
    </location>
    <ligand>
        <name>GTP</name>
        <dbReference type="ChEBI" id="CHEBI:37565"/>
    </ligand>
</feature>
<feature type="binding site" evidence="1">
    <location>
        <position position="20"/>
    </location>
    <ligand>
        <name>GTP</name>
        <dbReference type="ChEBI" id="CHEBI:37565"/>
    </ligand>
</feature>
<feature type="binding site" evidence="1">
    <location>
        <position position="99"/>
    </location>
    <ligand>
        <name>GTP</name>
        <dbReference type="ChEBI" id="CHEBI:37565"/>
    </ligand>
</feature>
<feature type="binding site" evidence="1">
    <location>
        <position position="99"/>
    </location>
    <ligand>
        <name>Mg(2+)</name>
        <dbReference type="ChEBI" id="CHEBI:18420"/>
    </ligand>
</feature>